<evidence type="ECO:0000255" key="1">
    <source>
        <dbReference type="HAMAP-Rule" id="MF_00600"/>
    </source>
</evidence>
<evidence type="ECO:0000256" key="2">
    <source>
        <dbReference type="SAM" id="MobiDB-lite"/>
    </source>
</evidence>
<dbReference type="EC" id="5.6.1.7" evidence="1"/>
<dbReference type="EMBL" id="CP000512">
    <property type="protein sequence ID" value="ABM31543.1"/>
    <property type="molecule type" value="Genomic_DNA"/>
</dbReference>
<dbReference type="RefSeq" id="WP_011794101.1">
    <property type="nucleotide sequence ID" value="NC_008752.1"/>
</dbReference>
<dbReference type="SMR" id="A1TKQ5"/>
<dbReference type="STRING" id="397945.Aave_0945"/>
<dbReference type="GeneID" id="79790598"/>
<dbReference type="KEGG" id="aav:Aave_0945"/>
<dbReference type="eggNOG" id="COG0459">
    <property type="taxonomic scope" value="Bacteria"/>
</dbReference>
<dbReference type="HOGENOM" id="CLU_016503_3_0_4"/>
<dbReference type="OrthoDB" id="9766614at2"/>
<dbReference type="Proteomes" id="UP000002596">
    <property type="component" value="Chromosome"/>
</dbReference>
<dbReference type="GO" id="GO:0005737">
    <property type="term" value="C:cytoplasm"/>
    <property type="evidence" value="ECO:0007669"/>
    <property type="project" value="UniProtKB-SubCell"/>
</dbReference>
<dbReference type="GO" id="GO:0005524">
    <property type="term" value="F:ATP binding"/>
    <property type="evidence" value="ECO:0007669"/>
    <property type="project" value="UniProtKB-UniRule"/>
</dbReference>
<dbReference type="GO" id="GO:0140662">
    <property type="term" value="F:ATP-dependent protein folding chaperone"/>
    <property type="evidence" value="ECO:0007669"/>
    <property type="project" value="InterPro"/>
</dbReference>
<dbReference type="GO" id="GO:0016853">
    <property type="term" value="F:isomerase activity"/>
    <property type="evidence" value="ECO:0007669"/>
    <property type="project" value="UniProtKB-KW"/>
</dbReference>
<dbReference type="GO" id="GO:0051082">
    <property type="term" value="F:unfolded protein binding"/>
    <property type="evidence" value="ECO:0007669"/>
    <property type="project" value="UniProtKB-UniRule"/>
</dbReference>
<dbReference type="GO" id="GO:0042026">
    <property type="term" value="P:protein refolding"/>
    <property type="evidence" value="ECO:0007669"/>
    <property type="project" value="UniProtKB-UniRule"/>
</dbReference>
<dbReference type="CDD" id="cd03344">
    <property type="entry name" value="GroEL"/>
    <property type="match status" value="1"/>
</dbReference>
<dbReference type="FunFam" id="1.10.560.10:FF:000001">
    <property type="entry name" value="60 kDa chaperonin"/>
    <property type="match status" value="1"/>
</dbReference>
<dbReference type="FunFam" id="3.50.7.10:FF:000001">
    <property type="entry name" value="60 kDa chaperonin"/>
    <property type="match status" value="1"/>
</dbReference>
<dbReference type="Gene3D" id="3.50.7.10">
    <property type="entry name" value="GroEL"/>
    <property type="match status" value="1"/>
</dbReference>
<dbReference type="Gene3D" id="1.10.560.10">
    <property type="entry name" value="GroEL-like equatorial domain"/>
    <property type="match status" value="1"/>
</dbReference>
<dbReference type="Gene3D" id="3.30.260.10">
    <property type="entry name" value="TCP-1-like chaperonin intermediate domain"/>
    <property type="match status" value="1"/>
</dbReference>
<dbReference type="HAMAP" id="MF_00600">
    <property type="entry name" value="CH60"/>
    <property type="match status" value="1"/>
</dbReference>
<dbReference type="InterPro" id="IPR018370">
    <property type="entry name" value="Chaperonin_Cpn60_CS"/>
</dbReference>
<dbReference type="InterPro" id="IPR001844">
    <property type="entry name" value="Cpn60/GroEL"/>
</dbReference>
<dbReference type="InterPro" id="IPR002423">
    <property type="entry name" value="Cpn60/GroEL/TCP-1"/>
</dbReference>
<dbReference type="InterPro" id="IPR027409">
    <property type="entry name" value="GroEL-like_apical_dom_sf"/>
</dbReference>
<dbReference type="InterPro" id="IPR027413">
    <property type="entry name" value="GROEL-like_equatorial_sf"/>
</dbReference>
<dbReference type="InterPro" id="IPR027410">
    <property type="entry name" value="TCP-1-like_intermed_sf"/>
</dbReference>
<dbReference type="NCBIfam" id="TIGR02348">
    <property type="entry name" value="GroEL"/>
    <property type="match status" value="1"/>
</dbReference>
<dbReference type="NCBIfam" id="NF000592">
    <property type="entry name" value="PRK00013.1"/>
    <property type="match status" value="1"/>
</dbReference>
<dbReference type="NCBIfam" id="NF009487">
    <property type="entry name" value="PRK12849.1"/>
    <property type="match status" value="1"/>
</dbReference>
<dbReference type="NCBIfam" id="NF009488">
    <property type="entry name" value="PRK12850.1"/>
    <property type="match status" value="1"/>
</dbReference>
<dbReference type="NCBIfam" id="NF009489">
    <property type="entry name" value="PRK12851.1"/>
    <property type="match status" value="1"/>
</dbReference>
<dbReference type="PANTHER" id="PTHR45633">
    <property type="entry name" value="60 KDA HEAT SHOCK PROTEIN, MITOCHONDRIAL"/>
    <property type="match status" value="1"/>
</dbReference>
<dbReference type="Pfam" id="PF00118">
    <property type="entry name" value="Cpn60_TCP1"/>
    <property type="match status" value="1"/>
</dbReference>
<dbReference type="PRINTS" id="PR00298">
    <property type="entry name" value="CHAPERONIN60"/>
</dbReference>
<dbReference type="SUPFAM" id="SSF52029">
    <property type="entry name" value="GroEL apical domain-like"/>
    <property type="match status" value="1"/>
</dbReference>
<dbReference type="SUPFAM" id="SSF48592">
    <property type="entry name" value="GroEL equatorial domain-like"/>
    <property type="match status" value="1"/>
</dbReference>
<dbReference type="SUPFAM" id="SSF54849">
    <property type="entry name" value="GroEL-intermediate domain like"/>
    <property type="match status" value="1"/>
</dbReference>
<dbReference type="PROSITE" id="PS00296">
    <property type="entry name" value="CHAPERONINS_CPN60"/>
    <property type="match status" value="1"/>
</dbReference>
<proteinExistence type="inferred from homology"/>
<protein>
    <recommendedName>
        <fullName evidence="1">Chaperonin GroEL</fullName>
        <ecNumber evidence="1">5.6.1.7</ecNumber>
    </recommendedName>
    <alternativeName>
        <fullName evidence="1">60 kDa chaperonin</fullName>
    </alternativeName>
    <alternativeName>
        <fullName evidence="1">Chaperonin-60</fullName>
        <shortName evidence="1">Cpn60</shortName>
    </alternativeName>
</protein>
<reference key="1">
    <citation type="submission" date="2006-12" db="EMBL/GenBank/DDBJ databases">
        <title>Complete sequence of Acidovorax avenae subsp. citrulli AAC00-1.</title>
        <authorList>
            <person name="Copeland A."/>
            <person name="Lucas S."/>
            <person name="Lapidus A."/>
            <person name="Barry K."/>
            <person name="Detter J.C."/>
            <person name="Glavina del Rio T."/>
            <person name="Dalin E."/>
            <person name="Tice H."/>
            <person name="Pitluck S."/>
            <person name="Kiss H."/>
            <person name="Brettin T."/>
            <person name="Bruce D."/>
            <person name="Han C."/>
            <person name="Tapia R."/>
            <person name="Gilna P."/>
            <person name="Schmutz J."/>
            <person name="Larimer F."/>
            <person name="Land M."/>
            <person name="Hauser L."/>
            <person name="Kyrpides N."/>
            <person name="Kim E."/>
            <person name="Stahl D."/>
            <person name="Richardson P."/>
        </authorList>
    </citation>
    <scope>NUCLEOTIDE SEQUENCE [LARGE SCALE GENOMIC DNA]</scope>
    <source>
        <strain>AAC00-1</strain>
    </source>
</reference>
<sequence length="545" mass="57008">MAAKDVVFGGEARARMVEGVNILANAVKVTLGPKGRNVVLERSFGAPTVTKDGVSVAKEIELKDKLQNMGAQLVKEVASKTSDNAGDGTTTATVLAQAIVREGSKYVAAGLNPMDLKRGIDKAVTALVAELKKASKATTTSKEIAQVGSISANSDESIGKIIADAMDKVGKEGVITVEDGKSLDNELDVVEGMQFDRGYLSPYFINNPEKQAALLDNPFVLLFDKKISNIRDLLPTLEQVAKAGRPLLIIAEEVEGEALATLVVNTIRGILKVVAVKAPGFGDRRKAMLEDIAILTGGKVIAEEVGLTLEKVTLADLGQAKRIEVGKENTTIIDGAGAAADIEARVKQIRIQIEEATSDYDREKLQERVAKLAGGVAVIKVGAATEVEMKEKKARVEDALHATRAAVEEGIVAGGGVALLRAKQAAGDIKGDNPDQDAGIKLILKAIEAPLREIVANAGGEPSVVVNAVLNGKGNYGFNAANDTYGDMLEMGILDPTKVTRTALQNAASVASLLLTTEAMVAEAPKDDAPAPAMPDMGGMGGMGM</sequence>
<organism>
    <name type="scientific">Paracidovorax citrulli (strain AAC00-1)</name>
    <name type="common">Acidovorax citrulli</name>
    <dbReference type="NCBI Taxonomy" id="397945"/>
    <lineage>
        <taxon>Bacteria</taxon>
        <taxon>Pseudomonadati</taxon>
        <taxon>Pseudomonadota</taxon>
        <taxon>Betaproteobacteria</taxon>
        <taxon>Burkholderiales</taxon>
        <taxon>Comamonadaceae</taxon>
        <taxon>Paracidovorax</taxon>
    </lineage>
</organism>
<accession>A1TKQ5</accession>
<feature type="chain" id="PRO_1000025744" description="Chaperonin GroEL">
    <location>
        <begin position="1"/>
        <end position="545"/>
    </location>
</feature>
<feature type="region of interest" description="Disordered" evidence="2">
    <location>
        <begin position="526"/>
        <end position="545"/>
    </location>
</feature>
<feature type="binding site" evidence="1">
    <location>
        <begin position="30"/>
        <end position="33"/>
    </location>
    <ligand>
        <name>ATP</name>
        <dbReference type="ChEBI" id="CHEBI:30616"/>
    </ligand>
</feature>
<feature type="binding site" evidence="1">
    <location>
        <position position="51"/>
    </location>
    <ligand>
        <name>ATP</name>
        <dbReference type="ChEBI" id="CHEBI:30616"/>
    </ligand>
</feature>
<feature type="binding site" evidence="1">
    <location>
        <begin position="87"/>
        <end position="91"/>
    </location>
    <ligand>
        <name>ATP</name>
        <dbReference type="ChEBI" id="CHEBI:30616"/>
    </ligand>
</feature>
<feature type="binding site" evidence="1">
    <location>
        <position position="415"/>
    </location>
    <ligand>
        <name>ATP</name>
        <dbReference type="ChEBI" id="CHEBI:30616"/>
    </ligand>
</feature>
<feature type="binding site" evidence="1">
    <location>
        <begin position="479"/>
        <end position="481"/>
    </location>
    <ligand>
        <name>ATP</name>
        <dbReference type="ChEBI" id="CHEBI:30616"/>
    </ligand>
</feature>
<feature type="binding site" evidence="1">
    <location>
        <position position="495"/>
    </location>
    <ligand>
        <name>ATP</name>
        <dbReference type="ChEBI" id="CHEBI:30616"/>
    </ligand>
</feature>
<gene>
    <name evidence="1" type="primary">groEL</name>
    <name evidence="1" type="synonym">groL</name>
    <name type="ordered locus">Aave_0945</name>
</gene>
<comment type="function">
    <text evidence="1">Together with its co-chaperonin GroES, plays an essential role in assisting protein folding. The GroEL-GroES system forms a nano-cage that allows encapsulation of the non-native substrate proteins and provides a physical environment optimized to promote and accelerate protein folding.</text>
</comment>
<comment type="catalytic activity">
    <reaction evidence="1">
        <text>ATP + H2O + a folded polypeptide = ADP + phosphate + an unfolded polypeptide.</text>
        <dbReference type="EC" id="5.6.1.7"/>
    </reaction>
</comment>
<comment type="subunit">
    <text evidence="1">Forms a cylinder of 14 subunits composed of two heptameric rings stacked back-to-back. Interacts with the co-chaperonin GroES.</text>
</comment>
<comment type="subcellular location">
    <subcellularLocation>
        <location evidence="1">Cytoplasm</location>
    </subcellularLocation>
</comment>
<comment type="similarity">
    <text evidence="1">Belongs to the chaperonin (HSP60) family.</text>
</comment>
<name>CH60_PARC0</name>
<keyword id="KW-0067">ATP-binding</keyword>
<keyword id="KW-0143">Chaperone</keyword>
<keyword id="KW-0963">Cytoplasm</keyword>
<keyword id="KW-0413">Isomerase</keyword>
<keyword id="KW-0547">Nucleotide-binding</keyword>